<keyword id="KW-0963">Cytoplasm</keyword>
<keyword id="KW-0396">Initiation factor</keyword>
<keyword id="KW-0648">Protein biosynthesis</keyword>
<keyword id="KW-1185">Reference proteome</keyword>
<sequence length="219" mass="25323">MPPRPRFDRRAPVRELPNINDRINYPKLRVVDADGTQLGVINREEALDVAKDRELDLVLVSEKADPPVCRIMDYGKFKFEQEKKAKEAKKKSHQTEVKEVKMRYKIDQHDYNVRIGQAVRFLKAGDKVKCTVIFRGREIQHTALAETLLRRMAKDLEEQAEIQQAPKREGRNMIMFLTPRKTPLIKTDKENQIPTRAVRTITAPPRATAAAKTQLNKDQ</sequence>
<evidence type="ECO:0000255" key="1">
    <source>
        <dbReference type="HAMAP-Rule" id="MF_00080"/>
    </source>
</evidence>
<accession>Q7TV76</accession>
<reference key="1">
    <citation type="journal article" date="2003" name="Nature">
        <title>Genome divergence in two Prochlorococcus ecotypes reflects oceanic niche differentiation.</title>
        <authorList>
            <person name="Rocap G."/>
            <person name="Larimer F.W."/>
            <person name="Lamerdin J.E."/>
            <person name="Malfatti S."/>
            <person name="Chain P."/>
            <person name="Ahlgren N.A."/>
            <person name="Arellano A."/>
            <person name="Coleman M."/>
            <person name="Hauser L."/>
            <person name="Hess W.R."/>
            <person name="Johnson Z.I."/>
            <person name="Land M.L."/>
            <person name="Lindell D."/>
            <person name="Post A.F."/>
            <person name="Regala W."/>
            <person name="Shah M."/>
            <person name="Shaw S.L."/>
            <person name="Steglich C."/>
            <person name="Sullivan M.B."/>
            <person name="Ting C.S."/>
            <person name="Tolonen A."/>
            <person name="Webb E.A."/>
            <person name="Zinser E.R."/>
            <person name="Chisholm S.W."/>
        </authorList>
    </citation>
    <scope>NUCLEOTIDE SEQUENCE [LARGE SCALE GENOMIC DNA]</scope>
    <source>
        <strain>MIT 9313</strain>
    </source>
</reference>
<feature type="chain" id="PRO_0000177554" description="Translation initiation factor IF-3">
    <location>
        <begin position="1"/>
        <end position="219"/>
    </location>
</feature>
<organism>
    <name type="scientific">Prochlorococcus marinus (strain MIT 9313)</name>
    <dbReference type="NCBI Taxonomy" id="74547"/>
    <lineage>
        <taxon>Bacteria</taxon>
        <taxon>Bacillati</taxon>
        <taxon>Cyanobacteriota</taxon>
        <taxon>Cyanophyceae</taxon>
        <taxon>Synechococcales</taxon>
        <taxon>Prochlorococcaceae</taxon>
        <taxon>Prochlorococcus</taxon>
    </lineage>
</organism>
<protein>
    <recommendedName>
        <fullName evidence="1">Translation initiation factor IF-3</fullName>
    </recommendedName>
</protein>
<gene>
    <name evidence="1" type="primary">infC</name>
    <name type="ordered locus">PMT_0119</name>
</gene>
<proteinExistence type="inferred from homology"/>
<dbReference type="EMBL" id="BX548175">
    <property type="protein sequence ID" value="CAE20294.1"/>
    <property type="molecule type" value="Genomic_DNA"/>
</dbReference>
<dbReference type="RefSeq" id="WP_011129498.1">
    <property type="nucleotide sequence ID" value="NC_005071.1"/>
</dbReference>
<dbReference type="SMR" id="Q7TV76"/>
<dbReference type="KEGG" id="pmt:PMT_0119"/>
<dbReference type="eggNOG" id="COG0290">
    <property type="taxonomic scope" value="Bacteria"/>
</dbReference>
<dbReference type="HOGENOM" id="CLU_054919_3_1_3"/>
<dbReference type="OrthoDB" id="9806014at2"/>
<dbReference type="Proteomes" id="UP000001423">
    <property type="component" value="Chromosome"/>
</dbReference>
<dbReference type="GO" id="GO:0005829">
    <property type="term" value="C:cytosol"/>
    <property type="evidence" value="ECO:0007669"/>
    <property type="project" value="TreeGrafter"/>
</dbReference>
<dbReference type="GO" id="GO:0016020">
    <property type="term" value="C:membrane"/>
    <property type="evidence" value="ECO:0007669"/>
    <property type="project" value="TreeGrafter"/>
</dbReference>
<dbReference type="GO" id="GO:0043022">
    <property type="term" value="F:ribosome binding"/>
    <property type="evidence" value="ECO:0007669"/>
    <property type="project" value="TreeGrafter"/>
</dbReference>
<dbReference type="GO" id="GO:0003743">
    <property type="term" value="F:translation initiation factor activity"/>
    <property type="evidence" value="ECO:0007669"/>
    <property type="project" value="UniProtKB-UniRule"/>
</dbReference>
<dbReference type="GO" id="GO:0032790">
    <property type="term" value="P:ribosome disassembly"/>
    <property type="evidence" value="ECO:0007669"/>
    <property type="project" value="TreeGrafter"/>
</dbReference>
<dbReference type="FunFam" id="3.10.20.80:FF:000001">
    <property type="entry name" value="Translation initiation factor IF-3"/>
    <property type="match status" value="1"/>
</dbReference>
<dbReference type="FunFam" id="3.30.110.10:FF:000001">
    <property type="entry name" value="Translation initiation factor IF-3"/>
    <property type="match status" value="1"/>
</dbReference>
<dbReference type="Gene3D" id="3.30.110.10">
    <property type="entry name" value="Translation initiation factor 3 (IF-3), C-terminal domain"/>
    <property type="match status" value="1"/>
</dbReference>
<dbReference type="Gene3D" id="3.10.20.80">
    <property type="entry name" value="Translation initiation factor 3 (IF-3), N-terminal domain"/>
    <property type="match status" value="1"/>
</dbReference>
<dbReference type="HAMAP" id="MF_00080">
    <property type="entry name" value="IF_3"/>
    <property type="match status" value="1"/>
</dbReference>
<dbReference type="InterPro" id="IPR036788">
    <property type="entry name" value="T_IF-3_C_sf"/>
</dbReference>
<dbReference type="InterPro" id="IPR036787">
    <property type="entry name" value="T_IF-3_N_sf"/>
</dbReference>
<dbReference type="InterPro" id="IPR019813">
    <property type="entry name" value="Translation_initiation_fac3_CS"/>
</dbReference>
<dbReference type="InterPro" id="IPR001288">
    <property type="entry name" value="Translation_initiation_fac_3"/>
</dbReference>
<dbReference type="InterPro" id="IPR019815">
    <property type="entry name" value="Translation_initiation_fac_3_C"/>
</dbReference>
<dbReference type="InterPro" id="IPR019814">
    <property type="entry name" value="Translation_initiation_fac_3_N"/>
</dbReference>
<dbReference type="NCBIfam" id="TIGR00168">
    <property type="entry name" value="infC"/>
    <property type="match status" value="1"/>
</dbReference>
<dbReference type="PANTHER" id="PTHR10938">
    <property type="entry name" value="TRANSLATION INITIATION FACTOR IF-3"/>
    <property type="match status" value="1"/>
</dbReference>
<dbReference type="PANTHER" id="PTHR10938:SF0">
    <property type="entry name" value="TRANSLATION INITIATION FACTOR IF-3, MITOCHONDRIAL"/>
    <property type="match status" value="1"/>
</dbReference>
<dbReference type="Pfam" id="PF00707">
    <property type="entry name" value="IF3_C"/>
    <property type="match status" value="1"/>
</dbReference>
<dbReference type="Pfam" id="PF05198">
    <property type="entry name" value="IF3_N"/>
    <property type="match status" value="1"/>
</dbReference>
<dbReference type="SUPFAM" id="SSF55200">
    <property type="entry name" value="Translation initiation factor IF3, C-terminal domain"/>
    <property type="match status" value="1"/>
</dbReference>
<dbReference type="SUPFAM" id="SSF54364">
    <property type="entry name" value="Translation initiation factor IF3, N-terminal domain"/>
    <property type="match status" value="1"/>
</dbReference>
<dbReference type="PROSITE" id="PS00938">
    <property type="entry name" value="IF3"/>
    <property type="match status" value="1"/>
</dbReference>
<comment type="function">
    <text evidence="1">IF-3 binds to the 30S ribosomal subunit and shifts the equilibrium between 70S ribosomes and their 50S and 30S subunits in favor of the free subunits, thus enhancing the availability of 30S subunits on which protein synthesis initiation begins.</text>
</comment>
<comment type="subunit">
    <text evidence="1">Monomer.</text>
</comment>
<comment type="subcellular location">
    <subcellularLocation>
        <location evidence="1">Cytoplasm</location>
    </subcellularLocation>
</comment>
<comment type="similarity">
    <text evidence="1">Belongs to the IF-3 family.</text>
</comment>
<name>IF3_PROMM</name>